<comment type="subunit">
    <text evidence="1">Forms oligomers.</text>
</comment>
<comment type="subcellular location">
    <subcellularLocation>
        <location evidence="1">Cytoplasm</location>
        <location evidence="1">Nucleoid</location>
    </subcellularLocation>
</comment>
<comment type="similarity">
    <text evidence="1">Belongs to the MraZ family.</text>
</comment>
<comment type="sequence caution" evidence="3">
    <conflict type="erroneous initiation">
        <sequence resource="EMBL-CDS" id="AAN66951"/>
    </conflict>
</comment>
<dbReference type="EMBL" id="AE015451">
    <property type="protein sequence ID" value="AAN66951.1"/>
    <property type="status" value="ALT_INIT"/>
    <property type="molecule type" value="Genomic_DNA"/>
</dbReference>
<dbReference type="RefSeq" id="NP_743487.1">
    <property type="nucleotide sequence ID" value="NC_002947.4"/>
</dbReference>
<dbReference type="RefSeq" id="WP_004575120.1">
    <property type="nucleotide sequence ID" value="NZ_CP169744.1"/>
</dbReference>
<dbReference type="SMR" id="Q88N85"/>
<dbReference type="STRING" id="160488.PP_1328"/>
<dbReference type="PaxDb" id="160488-PP_1328"/>
<dbReference type="GeneID" id="97169882"/>
<dbReference type="KEGG" id="ppu:PP_1328"/>
<dbReference type="PATRIC" id="fig|160488.4.peg.1406"/>
<dbReference type="eggNOG" id="COG2001">
    <property type="taxonomic scope" value="Bacteria"/>
</dbReference>
<dbReference type="HOGENOM" id="CLU_107907_2_0_6"/>
<dbReference type="OrthoDB" id="9807753at2"/>
<dbReference type="PhylomeDB" id="Q88N85"/>
<dbReference type="Proteomes" id="UP000000556">
    <property type="component" value="Chromosome"/>
</dbReference>
<dbReference type="GO" id="GO:0005737">
    <property type="term" value="C:cytoplasm"/>
    <property type="evidence" value="ECO:0007669"/>
    <property type="project" value="UniProtKB-UniRule"/>
</dbReference>
<dbReference type="GO" id="GO:0009295">
    <property type="term" value="C:nucleoid"/>
    <property type="evidence" value="ECO:0007669"/>
    <property type="project" value="UniProtKB-SubCell"/>
</dbReference>
<dbReference type="GO" id="GO:0003700">
    <property type="term" value="F:DNA-binding transcription factor activity"/>
    <property type="evidence" value="ECO:0007669"/>
    <property type="project" value="UniProtKB-UniRule"/>
</dbReference>
<dbReference type="GO" id="GO:0000976">
    <property type="term" value="F:transcription cis-regulatory region binding"/>
    <property type="evidence" value="ECO:0007669"/>
    <property type="project" value="TreeGrafter"/>
</dbReference>
<dbReference type="GO" id="GO:2000143">
    <property type="term" value="P:negative regulation of DNA-templated transcription initiation"/>
    <property type="evidence" value="ECO:0007669"/>
    <property type="project" value="TreeGrafter"/>
</dbReference>
<dbReference type="CDD" id="cd16321">
    <property type="entry name" value="MraZ_C"/>
    <property type="match status" value="1"/>
</dbReference>
<dbReference type="CDD" id="cd16320">
    <property type="entry name" value="MraZ_N"/>
    <property type="match status" value="1"/>
</dbReference>
<dbReference type="Gene3D" id="3.40.1550.20">
    <property type="entry name" value="Transcriptional regulator MraZ domain"/>
    <property type="match status" value="1"/>
</dbReference>
<dbReference type="HAMAP" id="MF_01008">
    <property type="entry name" value="MraZ"/>
    <property type="match status" value="1"/>
</dbReference>
<dbReference type="InterPro" id="IPR003444">
    <property type="entry name" value="MraZ"/>
</dbReference>
<dbReference type="InterPro" id="IPR035644">
    <property type="entry name" value="MraZ_C"/>
</dbReference>
<dbReference type="InterPro" id="IPR020603">
    <property type="entry name" value="MraZ_dom"/>
</dbReference>
<dbReference type="InterPro" id="IPR035642">
    <property type="entry name" value="MraZ_N"/>
</dbReference>
<dbReference type="InterPro" id="IPR038619">
    <property type="entry name" value="MraZ_sf"/>
</dbReference>
<dbReference type="InterPro" id="IPR007159">
    <property type="entry name" value="SpoVT-AbrB_dom"/>
</dbReference>
<dbReference type="InterPro" id="IPR037914">
    <property type="entry name" value="SpoVT-AbrB_sf"/>
</dbReference>
<dbReference type="NCBIfam" id="TIGR00242">
    <property type="entry name" value="division/cell wall cluster transcriptional repressor MraZ"/>
    <property type="match status" value="1"/>
</dbReference>
<dbReference type="PANTHER" id="PTHR34701">
    <property type="entry name" value="TRANSCRIPTIONAL REGULATOR MRAZ"/>
    <property type="match status" value="1"/>
</dbReference>
<dbReference type="PANTHER" id="PTHR34701:SF1">
    <property type="entry name" value="TRANSCRIPTIONAL REGULATOR MRAZ"/>
    <property type="match status" value="1"/>
</dbReference>
<dbReference type="Pfam" id="PF02381">
    <property type="entry name" value="MraZ"/>
    <property type="match status" value="2"/>
</dbReference>
<dbReference type="SUPFAM" id="SSF89447">
    <property type="entry name" value="AbrB/MazE/MraZ-like"/>
    <property type="match status" value="1"/>
</dbReference>
<dbReference type="PROSITE" id="PS51740">
    <property type="entry name" value="SPOVT_ABRB"/>
    <property type="match status" value="2"/>
</dbReference>
<keyword id="KW-0963">Cytoplasm</keyword>
<keyword id="KW-0238">DNA-binding</keyword>
<keyword id="KW-1185">Reference proteome</keyword>
<keyword id="KW-0677">Repeat</keyword>
<keyword id="KW-0804">Transcription</keyword>
<keyword id="KW-0805">Transcription regulation</keyword>
<proteinExistence type="inferred from homology"/>
<organism>
    <name type="scientific">Pseudomonas putida (strain ATCC 47054 / DSM 6125 / CFBP 8728 / NCIMB 11950 / KT2440)</name>
    <dbReference type="NCBI Taxonomy" id="160488"/>
    <lineage>
        <taxon>Bacteria</taxon>
        <taxon>Pseudomonadati</taxon>
        <taxon>Pseudomonadota</taxon>
        <taxon>Gammaproteobacteria</taxon>
        <taxon>Pseudomonadales</taxon>
        <taxon>Pseudomonadaceae</taxon>
        <taxon>Pseudomonas</taxon>
    </lineage>
</organism>
<sequence>MFRGANAVSLDAKGRLAMPSRYRDELDSRCNGQLIVTIDAVDPCLCVYPLDEWEQIEAKLRALPSLREENRRLQRLLIGNAVDLELDGSGRFLVPPRLREYAKLDKKAMLVGQLNKFQLWDEDAWNAVSAADLAAIQQPGAMPDELRDLIL</sequence>
<name>MRAZ_PSEPK</name>
<evidence type="ECO:0000255" key="1">
    <source>
        <dbReference type="HAMAP-Rule" id="MF_01008"/>
    </source>
</evidence>
<evidence type="ECO:0000255" key="2">
    <source>
        <dbReference type="PROSITE-ProRule" id="PRU01076"/>
    </source>
</evidence>
<evidence type="ECO:0000305" key="3"/>
<accession>Q88N85</accession>
<gene>
    <name evidence="1" type="primary">mraZ</name>
    <name type="ordered locus">PP_1328</name>
</gene>
<feature type="chain" id="PRO_0000108522" description="Transcriptional regulator MraZ">
    <location>
        <begin position="1"/>
        <end position="151"/>
    </location>
</feature>
<feature type="domain" description="SpoVT-AbrB 1" evidence="2">
    <location>
        <begin position="5"/>
        <end position="52"/>
    </location>
</feature>
<feature type="domain" description="SpoVT-AbrB 2" evidence="2">
    <location>
        <begin position="81"/>
        <end position="124"/>
    </location>
</feature>
<protein>
    <recommendedName>
        <fullName>Transcriptional regulator MraZ</fullName>
    </recommendedName>
</protein>
<reference key="1">
    <citation type="journal article" date="2002" name="Environ. Microbiol.">
        <title>Complete genome sequence and comparative analysis of the metabolically versatile Pseudomonas putida KT2440.</title>
        <authorList>
            <person name="Nelson K.E."/>
            <person name="Weinel C."/>
            <person name="Paulsen I.T."/>
            <person name="Dodson R.J."/>
            <person name="Hilbert H."/>
            <person name="Martins dos Santos V.A.P."/>
            <person name="Fouts D.E."/>
            <person name="Gill S.R."/>
            <person name="Pop M."/>
            <person name="Holmes M."/>
            <person name="Brinkac L.M."/>
            <person name="Beanan M.J."/>
            <person name="DeBoy R.T."/>
            <person name="Daugherty S.C."/>
            <person name="Kolonay J.F."/>
            <person name="Madupu R."/>
            <person name="Nelson W.C."/>
            <person name="White O."/>
            <person name="Peterson J.D."/>
            <person name="Khouri H.M."/>
            <person name="Hance I."/>
            <person name="Chris Lee P."/>
            <person name="Holtzapple E.K."/>
            <person name="Scanlan D."/>
            <person name="Tran K."/>
            <person name="Moazzez A."/>
            <person name="Utterback T.R."/>
            <person name="Rizzo M."/>
            <person name="Lee K."/>
            <person name="Kosack D."/>
            <person name="Moestl D."/>
            <person name="Wedler H."/>
            <person name="Lauber J."/>
            <person name="Stjepandic D."/>
            <person name="Hoheisel J."/>
            <person name="Straetz M."/>
            <person name="Heim S."/>
            <person name="Kiewitz C."/>
            <person name="Eisen J.A."/>
            <person name="Timmis K.N."/>
            <person name="Duesterhoeft A."/>
            <person name="Tuemmler B."/>
            <person name="Fraser C.M."/>
        </authorList>
    </citation>
    <scope>NUCLEOTIDE SEQUENCE [LARGE SCALE GENOMIC DNA]</scope>
    <source>
        <strain>ATCC 47054 / DSM 6125 / CFBP 8728 / NCIMB 11950 / KT2440</strain>
    </source>
</reference>